<feature type="chain" id="PRO_0000438717" description="E3 ubiquitin-protein ligase RGLG4">
    <location>
        <begin position="1"/>
        <end position="401"/>
    </location>
</feature>
<feature type="domain" description="VWFA" evidence="2">
    <location>
        <begin position="79"/>
        <end position="299"/>
    </location>
</feature>
<feature type="zinc finger region" description="RING-type" evidence="1">
    <location>
        <begin position="357"/>
        <end position="390"/>
    </location>
</feature>
<feature type="region of interest" description="Disordered" evidence="3">
    <location>
        <begin position="1"/>
        <end position="43"/>
    </location>
</feature>
<feature type="region of interest" description="Disordered" evidence="3">
    <location>
        <begin position="326"/>
        <end position="350"/>
    </location>
</feature>
<feature type="compositionally biased region" description="Low complexity" evidence="3">
    <location>
        <begin position="8"/>
        <end position="19"/>
    </location>
</feature>
<feature type="compositionally biased region" description="Polar residues" evidence="3">
    <location>
        <begin position="20"/>
        <end position="32"/>
    </location>
</feature>
<feature type="compositionally biased region" description="Pro residues" evidence="3">
    <location>
        <begin position="327"/>
        <end position="336"/>
    </location>
</feature>
<feature type="compositionally biased region" description="Polar residues" evidence="3">
    <location>
        <begin position="341"/>
        <end position="350"/>
    </location>
</feature>
<gene>
    <name evidence="7" type="primary">RGLG4</name>
    <name evidence="9" type="ordered locus">At1g79380</name>
    <name evidence="10" type="ORF">T8K14.20</name>
</gene>
<accession>Q9SAL0</accession>
<proteinExistence type="evidence at protein level"/>
<name>RGLG4_ARATH</name>
<keyword id="KW-0963">Cytoplasm</keyword>
<keyword id="KW-1184">Jasmonic acid signaling pathway</keyword>
<keyword id="KW-0479">Metal-binding</keyword>
<keyword id="KW-0539">Nucleus</keyword>
<keyword id="KW-1185">Reference proteome</keyword>
<keyword id="KW-0808">Transferase</keyword>
<keyword id="KW-0833">Ubl conjugation pathway</keyword>
<keyword id="KW-0862">Zinc</keyword>
<keyword id="KW-0863">Zinc-finger</keyword>
<sequence length="401" mass="43730">MTMGNFLKRFGSGKSRSSRNMTLGTTSSQSHEPSPSDPSLSLADNTNATKKKYALIPDRFSSLDQVSKALREAGLESSNLILGVDFTKSNEWTGKTSFDGKCLHALGETSNPYEKAIFVIGQTLAPFDEDNLIPCFGFGDSTTHDEEVFGFHSDNSPCHGFEEVLACYKRIAPNLRLSGPTSYGPLIDAAVDIVEKNNGQFHVLVIVADGQVTRGTDMAEGELSQQEKTTIDAIVNASSYALSIVLVGVGDGPWEDMRKFDDKIPKREFDNFQFVNFTEIMTRNSPESAKETAFALAALMEIPFQYQAAIELRLLGKQTGLAKTIVPRPPPIPYTPPTNAELPSTASPASPEQTQSCPICLTNRKDVAFSCGHMTCGDCGSKISNCPICRVRITNRLKLYT</sequence>
<organism>
    <name type="scientific">Arabidopsis thaliana</name>
    <name type="common">Mouse-ear cress</name>
    <dbReference type="NCBI Taxonomy" id="3702"/>
    <lineage>
        <taxon>Eukaryota</taxon>
        <taxon>Viridiplantae</taxon>
        <taxon>Streptophyta</taxon>
        <taxon>Embryophyta</taxon>
        <taxon>Tracheophyta</taxon>
        <taxon>Spermatophyta</taxon>
        <taxon>Magnoliopsida</taxon>
        <taxon>eudicotyledons</taxon>
        <taxon>Gunneridae</taxon>
        <taxon>Pentapetalae</taxon>
        <taxon>rosids</taxon>
        <taxon>malvids</taxon>
        <taxon>Brassicales</taxon>
        <taxon>Brassicaceae</taxon>
        <taxon>Camelineae</taxon>
        <taxon>Arabidopsis</taxon>
    </lineage>
</organism>
<protein>
    <recommendedName>
        <fullName evidence="8">E3 ubiquitin-protein ligase RGLG4</fullName>
        <ecNumber evidence="8">2.3.2.27</ecNumber>
    </recommendedName>
    <alternativeName>
        <fullName evidence="7">RING domain ligase 4</fullName>
    </alternativeName>
</protein>
<reference key="1">
    <citation type="journal article" date="2000" name="Nature">
        <title>Sequence and analysis of chromosome 1 of the plant Arabidopsis thaliana.</title>
        <authorList>
            <person name="Theologis A."/>
            <person name="Ecker J.R."/>
            <person name="Palm C.J."/>
            <person name="Federspiel N.A."/>
            <person name="Kaul S."/>
            <person name="White O."/>
            <person name="Alonso J."/>
            <person name="Altafi H."/>
            <person name="Araujo R."/>
            <person name="Bowman C.L."/>
            <person name="Brooks S.Y."/>
            <person name="Buehler E."/>
            <person name="Chan A."/>
            <person name="Chao Q."/>
            <person name="Chen H."/>
            <person name="Cheuk R.F."/>
            <person name="Chin C.W."/>
            <person name="Chung M.K."/>
            <person name="Conn L."/>
            <person name="Conway A.B."/>
            <person name="Conway A.R."/>
            <person name="Creasy T.H."/>
            <person name="Dewar K."/>
            <person name="Dunn P."/>
            <person name="Etgu P."/>
            <person name="Feldblyum T.V."/>
            <person name="Feng J.-D."/>
            <person name="Fong B."/>
            <person name="Fujii C.Y."/>
            <person name="Gill J.E."/>
            <person name="Goldsmith A.D."/>
            <person name="Haas B."/>
            <person name="Hansen N.F."/>
            <person name="Hughes B."/>
            <person name="Huizar L."/>
            <person name="Hunter J.L."/>
            <person name="Jenkins J."/>
            <person name="Johnson-Hopson C."/>
            <person name="Khan S."/>
            <person name="Khaykin E."/>
            <person name="Kim C.J."/>
            <person name="Koo H.L."/>
            <person name="Kremenetskaia I."/>
            <person name="Kurtz D.B."/>
            <person name="Kwan A."/>
            <person name="Lam B."/>
            <person name="Langin-Hooper S."/>
            <person name="Lee A."/>
            <person name="Lee J.M."/>
            <person name="Lenz C.A."/>
            <person name="Li J.H."/>
            <person name="Li Y.-P."/>
            <person name="Lin X."/>
            <person name="Liu S.X."/>
            <person name="Liu Z.A."/>
            <person name="Luros J.S."/>
            <person name="Maiti R."/>
            <person name="Marziali A."/>
            <person name="Militscher J."/>
            <person name="Miranda M."/>
            <person name="Nguyen M."/>
            <person name="Nierman W.C."/>
            <person name="Osborne B.I."/>
            <person name="Pai G."/>
            <person name="Peterson J."/>
            <person name="Pham P.K."/>
            <person name="Rizzo M."/>
            <person name="Rooney T."/>
            <person name="Rowley D."/>
            <person name="Sakano H."/>
            <person name="Salzberg S.L."/>
            <person name="Schwartz J.R."/>
            <person name="Shinn P."/>
            <person name="Southwick A.M."/>
            <person name="Sun H."/>
            <person name="Tallon L.J."/>
            <person name="Tambunga G."/>
            <person name="Toriumi M.J."/>
            <person name="Town C.D."/>
            <person name="Utterback T."/>
            <person name="Van Aken S."/>
            <person name="Vaysberg M."/>
            <person name="Vysotskaia V.S."/>
            <person name="Walker M."/>
            <person name="Wu D."/>
            <person name="Yu G."/>
            <person name="Fraser C.M."/>
            <person name="Venter J.C."/>
            <person name="Davis R.W."/>
        </authorList>
    </citation>
    <scope>NUCLEOTIDE SEQUENCE [LARGE SCALE GENOMIC DNA]</scope>
    <source>
        <strain>cv. Columbia</strain>
    </source>
</reference>
<reference key="2">
    <citation type="journal article" date="2017" name="Plant J.">
        <title>Araport11: a complete reannotation of the Arabidopsis thaliana reference genome.</title>
        <authorList>
            <person name="Cheng C.Y."/>
            <person name="Krishnakumar V."/>
            <person name="Chan A.P."/>
            <person name="Thibaud-Nissen F."/>
            <person name="Schobel S."/>
            <person name="Town C.D."/>
        </authorList>
    </citation>
    <scope>GENOME REANNOTATION</scope>
    <source>
        <strain>cv. Columbia</strain>
    </source>
</reference>
<reference key="3">
    <citation type="journal article" date="2003" name="Science">
        <title>Empirical analysis of transcriptional activity in the Arabidopsis genome.</title>
        <authorList>
            <person name="Yamada K."/>
            <person name="Lim J."/>
            <person name="Dale J.M."/>
            <person name="Chen H."/>
            <person name="Shinn P."/>
            <person name="Palm C.J."/>
            <person name="Southwick A.M."/>
            <person name="Wu H.C."/>
            <person name="Kim C.J."/>
            <person name="Nguyen M."/>
            <person name="Pham P.K."/>
            <person name="Cheuk R.F."/>
            <person name="Karlin-Newmann G."/>
            <person name="Liu S.X."/>
            <person name="Lam B."/>
            <person name="Sakano H."/>
            <person name="Wu T."/>
            <person name="Yu G."/>
            <person name="Miranda M."/>
            <person name="Quach H.L."/>
            <person name="Tripp M."/>
            <person name="Chang C.H."/>
            <person name="Lee J.M."/>
            <person name="Toriumi M.J."/>
            <person name="Chan M.M."/>
            <person name="Tang C.C."/>
            <person name="Onodera C.S."/>
            <person name="Deng J.M."/>
            <person name="Akiyama K."/>
            <person name="Ansari Y."/>
            <person name="Arakawa T."/>
            <person name="Banh J."/>
            <person name="Banno F."/>
            <person name="Bowser L."/>
            <person name="Brooks S.Y."/>
            <person name="Carninci P."/>
            <person name="Chao Q."/>
            <person name="Choy N."/>
            <person name="Enju A."/>
            <person name="Goldsmith A.D."/>
            <person name="Gurjal M."/>
            <person name="Hansen N.F."/>
            <person name="Hayashizaki Y."/>
            <person name="Johnson-Hopson C."/>
            <person name="Hsuan V.W."/>
            <person name="Iida K."/>
            <person name="Karnes M."/>
            <person name="Khan S."/>
            <person name="Koesema E."/>
            <person name="Ishida J."/>
            <person name="Jiang P.X."/>
            <person name="Jones T."/>
            <person name="Kawai J."/>
            <person name="Kamiya A."/>
            <person name="Meyers C."/>
            <person name="Nakajima M."/>
            <person name="Narusaka M."/>
            <person name="Seki M."/>
            <person name="Sakurai T."/>
            <person name="Satou M."/>
            <person name="Tamse R."/>
            <person name="Vaysberg M."/>
            <person name="Wallender E.K."/>
            <person name="Wong C."/>
            <person name="Yamamura Y."/>
            <person name="Yuan S."/>
            <person name="Shinozaki K."/>
            <person name="Davis R.W."/>
            <person name="Theologis A."/>
            <person name="Ecker J.R."/>
        </authorList>
    </citation>
    <scope>NUCLEOTIDE SEQUENCE [LARGE SCALE MRNA]</scope>
    <source>
        <strain>cv. Columbia</strain>
    </source>
</reference>
<reference key="4">
    <citation type="journal article" date="2012" name="Plant Physiol.">
        <title>Two novel RING-type ubiquitin ligases, RGLG3 and RGLG4, are essential for jasmonate-mediated responses in Arabidopsis.</title>
        <authorList>
            <person name="Zhang X."/>
            <person name="Wu Q."/>
            <person name="Ren J."/>
            <person name="Qian W."/>
            <person name="He S."/>
            <person name="Huang K."/>
            <person name="Yu X."/>
            <person name="Gao Y."/>
            <person name="Huang P."/>
            <person name="An C."/>
        </authorList>
    </citation>
    <scope>FUNCTION</scope>
    <scope>TISSUE SPECIFICITY</scope>
    <scope>DISRUPTION PHENOTYPE</scope>
</reference>
<reference key="5">
    <citation type="journal article" date="2015" name="J. Exp. Bot.">
        <title>Hijacking of the jasmonate pathway by the mycotoxin fumonisin B1 (FB1) to initiate programmed cell death in Arabidopsis is modulated by RGLG3 and RGLG4.</title>
        <authorList>
            <person name="Zhang X."/>
            <person name="Wu Q."/>
            <person name="Cui S."/>
            <person name="Ren J."/>
            <person name="Qian W."/>
            <person name="Yang Y."/>
            <person name="He S."/>
            <person name="Chu J."/>
            <person name="Sun X."/>
            <person name="Yan C."/>
            <person name="Yu X."/>
            <person name="An C."/>
        </authorList>
    </citation>
    <scope>FUNCTION</scope>
    <scope>SUBCELLULAR LOCATION</scope>
    <scope>INDUCTION</scope>
</reference>
<reference key="6">
    <citation type="journal article" date="2016" name="Plant Cell Physiol.">
        <title>The Arabidopsis iron-sulfur protein GRXS17 is a target of the ubiquitin E3 ligases RGLG3 and RGLG4.</title>
        <authorList>
            <person name="Nagels Durand A."/>
            <person name="Inigo S."/>
            <person name="Ritter A."/>
            <person name="Iniesto E."/>
            <person name="De Clercq R."/>
            <person name="Staes A."/>
            <person name="Van Leene J."/>
            <person name="Rubio V."/>
            <person name="Gevaert K."/>
            <person name="De Jaeger G."/>
            <person name="Pauwels L."/>
            <person name="Goossens A."/>
        </authorList>
    </citation>
    <scope>FUNCTION</scope>
    <scope>INTERACTION WITH UBC30; GRXS17 AND GLB3</scope>
</reference>
<evidence type="ECO:0000255" key="1">
    <source>
        <dbReference type="PROSITE-ProRule" id="PRU00175"/>
    </source>
</evidence>
<evidence type="ECO:0000255" key="2">
    <source>
        <dbReference type="PROSITE-ProRule" id="PRU00219"/>
    </source>
</evidence>
<evidence type="ECO:0000256" key="3">
    <source>
        <dbReference type="SAM" id="MobiDB-lite"/>
    </source>
</evidence>
<evidence type="ECO:0000269" key="4">
    <source>
    </source>
</evidence>
<evidence type="ECO:0000269" key="5">
    <source>
    </source>
</evidence>
<evidence type="ECO:0000269" key="6">
    <source>
    </source>
</evidence>
<evidence type="ECO:0000303" key="7">
    <source>
    </source>
</evidence>
<evidence type="ECO:0000305" key="8"/>
<evidence type="ECO:0000312" key="9">
    <source>
        <dbReference type="Araport" id="AT1G79380"/>
    </source>
</evidence>
<evidence type="ECO:0000312" key="10">
    <source>
        <dbReference type="EMBL" id="AAD30238.1"/>
    </source>
</evidence>
<dbReference type="EC" id="2.3.2.27" evidence="8"/>
<dbReference type="EMBL" id="AC007202">
    <property type="protein sequence ID" value="AAD30238.1"/>
    <property type="molecule type" value="Genomic_DNA"/>
</dbReference>
<dbReference type="EMBL" id="CP002684">
    <property type="protein sequence ID" value="AEE36236.1"/>
    <property type="molecule type" value="Genomic_DNA"/>
</dbReference>
<dbReference type="EMBL" id="AF372928">
    <property type="protein sequence ID" value="AAK50068.1"/>
    <property type="molecule type" value="mRNA"/>
</dbReference>
<dbReference type="EMBL" id="AY133585">
    <property type="protein sequence ID" value="AAM91415.1"/>
    <property type="molecule type" value="mRNA"/>
</dbReference>
<dbReference type="PIR" id="G96824">
    <property type="entry name" value="G96824"/>
</dbReference>
<dbReference type="RefSeq" id="NP_565206.1">
    <property type="nucleotide sequence ID" value="NM_106586.4"/>
</dbReference>
<dbReference type="SMR" id="Q9SAL0"/>
<dbReference type="FunCoup" id="Q9SAL0">
    <property type="interactions" value="190"/>
</dbReference>
<dbReference type="STRING" id="3702.Q9SAL0"/>
<dbReference type="iPTMnet" id="Q9SAL0"/>
<dbReference type="PaxDb" id="3702-AT1G79380.1"/>
<dbReference type="ProteomicsDB" id="236856"/>
<dbReference type="EnsemblPlants" id="AT1G79380.1">
    <property type="protein sequence ID" value="AT1G79380.1"/>
    <property type="gene ID" value="AT1G79380"/>
</dbReference>
<dbReference type="GeneID" id="844276"/>
<dbReference type="Gramene" id="AT1G79380.1">
    <property type="protein sequence ID" value="AT1G79380.1"/>
    <property type="gene ID" value="AT1G79380"/>
</dbReference>
<dbReference type="KEGG" id="ath:AT1G79380"/>
<dbReference type="Araport" id="AT1G79380"/>
<dbReference type="TAIR" id="AT1G79380">
    <property type="gene designation" value="RGLG4"/>
</dbReference>
<dbReference type="eggNOG" id="KOG1327">
    <property type="taxonomic scope" value="Eukaryota"/>
</dbReference>
<dbReference type="HOGENOM" id="CLU_035766_1_1_1"/>
<dbReference type="InParanoid" id="Q9SAL0"/>
<dbReference type="OMA" id="FICIQKL"/>
<dbReference type="PhylomeDB" id="Q9SAL0"/>
<dbReference type="PRO" id="PR:Q9SAL0"/>
<dbReference type="Proteomes" id="UP000006548">
    <property type="component" value="Chromosome 1"/>
</dbReference>
<dbReference type="ExpressionAtlas" id="Q9SAL0">
    <property type="expression patterns" value="baseline and differential"/>
</dbReference>
<dbReference type="GO" id="GO:0005737">
    <property type="term" value="C:cytoplasm"/>
    <property type="evidence" value="ECO:0000314"/>
    <property type="project" value="UniProtKB"/>
</dbReference>
<dbReference type="GO" id="GO:0005739">
    <property type="term" value="C:mitochondrion"/>
    <property type="evidence" value="ECO:0007005"/>
    <property type="project" value="TAIR"/>
</dbReference>
<dbReference type="GO" id="GO:0005634">
    <property type="term" value="C:nucleus"/>
    <property type="evidence" value="ECO:0000314"/>
    <property type="project" value="UniProtKB"/>
</dbReference>
<dbReference type="GO" id="GO:0004842">
    <property type="term" value="F:ubiquitin-protein transferase activity"/>
    <property type="evidence" value="ECO:0000314"/>
    <property type="project" value="TAIR"/>
</dbReference>
<dbReference type="GO" id="GO:0008270">
    <property type="term" value="F:zinc ion binding"/>
    <property type="evidence" value="ECO:0007669"/>
    <property type="project" value="UniProtKB-KW"/>
</dbReference>
<dbReference type="GO" id="GO:0042742">
    <property type="term" value="P:defense response to bacterium"/>
    <property type="evidence" value="ECO:0000315"/>
    <property type="project" value="TAIR"/>
</dbReference>
<dbReference type="GO" id="GO:0009867">
    <property type="term" value="P:jasmonic acid mediated signaling pathway"/>
    <property type="evidence" value="ECO:0000315"/>
    <property type="project" value="TAIR"/>
</dbReference>
<dbReference type="GO" id="GO:0009611">
    <property type="term" value="P:response to wounding"/>
    <property type="evidence" value="ECO:0000315"/>
    <property type="project" value="TAIR"/>
</dbReference>
<dbReference type="Gene3D" id="3.30.40.10">
    <property type="entry name" value="Zinc/RING finger domain, C3HC4 (zinc finger)"/>
    <property type="match status" value="1"/>
</dbReference>
<dbReference type="InterPro" id="IPR010734">
    <property type="entry name" value="Copine_C"/>
</dbReference>
<dbReference type="InterPro" id="IPR052079">
    <property type="entry name" value="E3_ligase/Copine_domain"/>
</dbReference>
<dbReference type="InterPro" id="IPR002035">
    <property type="entry name" value="VWF_A"/>
</dbReference>
<dbReference type="InterPro" id="IPR036465">
    <property type="entry name" value="vWFA_dom_sf"/>
</dbReference>
<dbReference type="InterPro" id="IPR001841">
    <property type="entry name" value="Znf_RING"/>
</dbReference>
<dbReference type="InterPro" id="IPR013083">
    <property type="entry name" value="Znf_RING/FYVE/PHD"/>
</dbReference>
<dbReference type="PANTHER" id="PTHR45751">
    <property type="entry name" value="COPINE FAMILY PROTEIN 1"/>
    <property type="match status" value="1"/>
</dbReference>
<dbReference type="PANTHER" id="PTHR45751:SF16">
    <property type="entry name" value="E3 UBIQUITIN-PROTEIN LIGASE RGLG4"/>
    <property type="match status" value="1"/>
</dbReference>
<dbReference type="Pfam" id="PF07002">
    <property type="entry name" value="Copine"/>
    <property type="match status" value="1"/>
</dbReference>
<dbReference type="Pfam" id="PF13920">
    <property type="entry name" value="zf-C3HC4_3"/>
    <property type="match status" value="1"/>
</dbReference>
<dbReference type="SMART" id="SM00184">
    <property type="entry name" value="RING"/>
    <property type="match status" value="1"/>
</dbReference>
<dbReference type="SMART" id="SM00327">
    <property type="entry name" value="VWA"/>
    <property type="match status" value="1"/>
</dbReference>
<dbReference type="SUPFAM" id="SSF57850">
    <property type="entry name" value="RING/U-box"/>
    <property type="match status" value="1"/>
</dbReference>
<dbReference type="SUPFAM" id="SSF53300">
    <property type="entry name" value="vWA-like"/>
    <property type="match status" value="1"/>
</dbReference>
<dbReference type="PROSITE" id="PS50089">
    <property type="entry name" value="ZF_RING_2"/>
    <property type="match status" value="1"/>
</dbReference>
<comment type="function">
    <text evidence="4 5 6">Possesses E3 ubiquitin-protein ligase in vitro. Acts as upstream modulator of jasmonate (JA) signaling in response to various stimuli, such as JA-inhibited root growth, JA-inductive gene expression, coronatine-mediated pathogen susceptibility, wound-stimulated expression of JA-responsive genes and wound-induced JA biosynthesis (PubMed:22898498). Controls fumonisin B1 (FB1)-triggered programmed cell death (PCD) by modulating the JA signaling pathway. May mediate salicylic acid (SA) suppression of JA signaling in FB1-induced responses (PubMed:25788731). May mediate the formation of 'Lys-48'-linked multiubiquitin chains. Mediates the polyubiquitination and subsequent proteasomal degradation of the target protein GRXS17 (PubMed:27497447).</text>
</comment>
<comment type="catalytic activity">
    <reaction evidence="8">
        <text>S-ubiquitinyl-[E2 ubiquitin-conjugating enzyme]-L-cysteine + [acceptor protein]-L-lysine = [E2 ubiquitin-conjugating enzyme]-L-cysteine + N(6)-ubiquitinyl-[acceptor protein]-L-lysine.</text>
        <dbReference type="EC" id="2.3.2.27"/>
    </reaction>
</comment>
<comment type="subunit">
    <text evidence="6">Interacts with UBC30, GRXS17 and GLB3.</text>
</comment>
<comment type="subcellular location">
    <subcellularLocation>
        <location evidence="5">Cytoplasm</location>
    </subcellularLocation>
    <subcellularLocation>
        <location evidence="5">Nucleus</location>
    </subcellularLocation>
</comment>
<comment type="tissue specificity">
    <text evidence="4">Widely expressed.</text>
</comment>
<comment type="induction">
    <text evidence="5">Repressed by the mycotoxin fumonisin B1.</text>
</comment>
<comment type="disruption phenotype">
    <text evidence="4">No visible phenotype under normal growth conditions. The double mutant plants rglg3 and rglg4 show decreased sensitivity to jasmonate.</text>
</comment>